<feature type="chain" id="PRO_0000411583" description="Queuine tRNA-ribosyltransferase">
    <location>
        <begin position="1"/>
        <end position="380"/>
    </location>
</feature>
<feature type="region of interest" description="RNA binding" evidence="1">
    <location>
        <begin position="251"/>
        <end position="257"/>
    </location>
</feature>
<feature type="region of interest" description="RNA binding; important for wobble base 34 recognition" evidence="1">
    <location>
        <begin position="275"/>
        <end position="279"/>
    </location>
</feature>
<feature type="active site" description="Proton acceptor" evidence="1">
    <location>
        <position position="96"/>
    </location>
</feature>
<feature type="active site" description="Nucleophile" evidence="1">
    <location>
        <position position="270"/>
    </location>
</feature>
<feature type="binding site" evidence="1">
    <location>
        <begin position="96"/>
        <end position="100"/>
    </location>
    <ligand>
        <name>substrate</name>
    </ligand>
</feature>
<feature type="binding site" evidence="1">
    <location>
        <position position="150"/>
    </location>
    <ligand>
        <name>substrate</name>
    </ligand>
</feature>
<feature type="binding site" evidence="1">
    <location>
        <position position="193"/>
    </location>
    <ligand>
        <name>substrate</name>
    </ligand>
</feature>
<feature type="binding site" evidence="1">
    <location>
        <position position="220"/>
    </location>
    <ligand>
        <name>substrate</name>
    </ligand>
</feature>
<feature type="binding site" evidence="1">
    <location>
        <position position="308"/>
    </location>
    <ligand>
        <name>Zn(2+)</name>
        <dbReference type="ChEBI" id="CHEBI:29105"/>
    </ligand>
</feature>
<feature type="binding site" evidence="1">
    <location>
        <position position="310"/>
    </location>
    <ligand>
        <name>Zn(2+)</name>
        <dbReference type="ChEBI" id="CHEBI:29105"/>
    </ligand>
</feature>
<feature type="binding site" evidence="1">
    <location>
        <position position="313"/>
    </location>
    <ligand>
        <name>Zn(2+)</name>
        <dbReference type="ChEBI" id="CHEBI:29105"/>
    </ligand>
</feature>
<feature type="binding site" evidence="1">
    <location>
        <position position="339"/>
    </location>
    <ligand>
        <name>Zn(2+)</name>
        <dbReference type="ChEBI" id="CHEBI:29105"/>
    </ligand>
</feature>
<proteinExistence type="inferred from homology"/>
<organism>
    <name type="scientific">Streptococcus pyogenes serotype M3 (strain SSI-1)</name>
    <dbReference type="NCBI Taxonomy" id="193567"/>
    <lineage>
        <taxon>Bacteria</taxon>
        <taxon>Bacillati</taxon>
        <taxon>Bacillota</taxon>
        <taxon>Bacilli</taxon>
        <taxon>Lactobacillales</taxon>
        <taxon>Streptococcaceae</taxon>
        <taxon>Streptococcus</taxon>
    </lineage>
</organism>
<evidence type="ECO:0000255" key="1">
    <source>
        <dbReference type="HAMAP-Rule" id="MF_00168"/>
    </source>
</evidence>
<protein>
    <recommendedName>
        <fullName evidence="1">Queuine tRNA-ribosyltransferase</fullName>
        <ecNumber evidence="1">2.4.2.29</ecNumber>
    </recommendedName>
    <alternativeName>
        <fullName evidence="1">Guanine insertion enzyme</fullName>
    </alternativeName>
    <alternativeName>
        <fullName evidence="1">tRNA-guanine transglycosylase</fullName>
    </alternativeName>
</protein>
<sequence>MTDYPIKYRLIKTEKHTGARLGEIITPHGTFPTPMFMPVGTQATVKTQSPEELKAIGSGIILSNTYHLWLRPGDELIARSGGLHKFMNWDQPILTDSGGFQVYSLADSRNITEEGVTFKNHLNGSKMFLSPEKAISIQNNLGSDIMMSFDECPQFYQPYDYVKKSIERTSRWAERGLKAHRRPHDQGLFGIVQGAGFEDLRRQSAADLVAMDFPGYSIGGLAVGESHEEMNAVLDFTTPLLPENKPRYLMGVGAPDSLIDGVIRGVDMFDCVLPTRIARNGTCMTSEGRLVIKNAKFAEDFTPLDHDCDCYTCQNYSRAYIRHLLKADETFGIRLTSYHNLYFLVNLMKKVRQAIMDDNLLEFRQDFLERYGYNKSNRNF</sequence>
<name>TGT_STRPQ</name>
<reference key="1">
    <citation type="journal article" date="2003" name="Genome Res.">
        <title>Genome sequence of an M3 strain of Streptococcus pyogenes reveals a large-scale genomic rearrangement in invasive strains and new insights into phage evolution.</title>
        <authorList>
            <person name="Nakagawa I."/>
            <person name="Kurokawa K."/>
            <person name="Yamashita A."/>
            <person name="Nakata M."/>
            <person name="Tomiyasu Y."/>
            <person name="Okahashi N."/>
            <person name="Kawabata S."/>
            <person name="Yamazaki K."/>
            <person name="Shiba T."/>
            <person name="Yasunaga T."/>
            <person name="Hayashi H."/>
            <person name="Hattori M."/>
            <person name="Hamada S."/>
        </authorList>
    </citation>
    <scope>NUCLEOTIDE SEQUENCE [LARGE SCALE GENOMIC DNA]</scope>
    <source>
        <strain>SSI-1</strain>
    </source>
</reference>
<gene>
    <name evidence="1" type="primary">tgt</name>
    <name type="ordered locus">SPs0154</name>
</gene>
<dbReference type="EC" id="2.4.2.29" evidence="1"/>
<dbReference type="EMBL" id="BA000034">
    <property type="protein sequence ID" value="BAC63249.1"/>
    <property type="molecule type" value="Genomic_DNA"/>
</dbReference>
<dbReference type="RefSeq" id="WP_002986319.1">
    <property type="nucleotide sequence ID" value="NC_004606.1"/>
</dbReference>
<dbReference type="SMR" id="P0DF87"/>
<dbReference type="GeneID" id="69900150"/>
<dbReference type="KEGG" id="sps:SPs0154"/>
<dbReference type="HOGENOM" id="CLU_022060_0_1_9"/>
<dbReference type="UniPathway" id="UPA00392"/>
<dbReference type="GO" id="GO:0005829">
    <property type="term" value="C:cytosol"/>
    <property type="evidence" value="ECO:0007669"/>
    <property type="project" value="TreeGrafter"/>
</dbReference>
<dbReference type="GO" id="GO:0046872">
    <property type="term" value="F:metal ion binding"/>
    <property type="evidence" value="ECO:0007669"/>
    <property type="project" value="UniProtKB-KW"/>
</dbReference>
<dbReference type="GO" id="GO:0008479">
    <property type="term" value="F:tRNA-guanosine(34) queuine transglycosylase activity"/>
    <property type="evidence" value="ECO:0007669"/>
    <property type="project" value="UniProtKB-UniRule"/>
</dbReference>
<dbReference type="GO" id="GO:0008616">
    <property type="term" value="P:queuosine biosynthetic process"/>
    <property type="evidence" value="ECO:0007669"/>
    <property type="project" value="UniProtKB-UniRule"/>
</dbReference>
<dbReference type="GO" id="GO:0002099">
    <property type="term" value="P:tRNA wobble guanine modification"/>
    <property type="evidence" value="ECO:0007669"/>
    <property type="project" value="TreeGrafter"/>
</dbReference>
<dbReference type="GO" id="GO:0101030">
    <property type="term" value="P:tRNA-guanine transglycosylation"/>
    <property type="evidence" value="ECO:0007669"/>
    <property type="project" value="InterPro"/>
</dbReference>
<dbReference type="FunFam" id="3.20.20.105:FF:000001">
    <property type="entry name" value="Queuine tRNA-ribosyltransferase"/>
    <property type="match status" value="1"/>
</dbReference>
<dbReference type="Gene3D" id="3.20.20.105">
    <property type="entry name" value="Queuine tRNA-ribosyltransferase-like"/>
    <property type="match status" value="1"/>
</dbReference>
<dbReference type="HAMAP" id="MF_00168">
    <property type="entry name" value="Q_tRNA_Tgt"/>
    <property type="match status" value="1"/>
</dbReference>
<dbReference type="InterPro" id="IPR050076">
    <property type="entry name" value="ArchSynthase1/Queuine_TRR"/>
</dbReference>
<dbReference type="InterPro" id="IPR004803">
    <property type="entry name" value="TGT"/>
</dbReference>
<dbReference type="InterPro" id="IPR036511">
    <property type="entry name" value="TGT-like_sf"/>
</dbReference>
<dbReference type="InterPro" id="IPR002616">
    <property type="entry name" value="tRNA_ribo_trans-like"/>
</dbReference>
<dbReference type="NCBIfam" id="TIGR00430">
    <property type="entry name" value="Q_tRNA_tgt"/>
    <property type="match status" value="1"/>
</dbReference>
<dbReference type="NCBIfam" id="TIGR00449">
    <property type="entry name" value="tgt_general"/>
    <property type="match status" value="1"/>
</dbReference>
<dbReference type="PANTHER" id="PTHR46499">
    <property type="entry name" value="QUEUINE TRNA-RIBOSYLTRANSFERASE"/>
    <property type="match status" value="1"/>
</dbReference>
<dbReference type="PANTHER" id="PTHR46499:SF1">
    <property type="entry name" value="QUEUINE TRNA-RIBOSYLTRANSFERASE"/>
    <property type="match status" value="1"/>
</dbReference>
<dbReference type="Pfam" id="PF01702">
    <property type="entry name" value="TGT"/>
    <property type="match status" value="1"/>
</dbReference>
<dbReference type="SUPFAM" id="SSF51713">
    <property type="entry name" value="tRNA-guanine transglycosylase"/>
    <property type="match status" value="1"/>
</dbReference>
<accession>P0DF87</accession>
<accession>P66909</accession>
<accession>Q8P2S1</accession>
<keyword id="KW-0328">Glycosyltransferase</keyword>
<keyword id="KW-0479">Metal-binding</keyword>
<keyword id="KW-0671">Queuosine biosynthesis</keyword>
<keyword id="KW-0808">Transferase</keyword>
<keyword id="KW-0819">tRNA processing</keyword>
<keyword id="KW-0862">Zinc</keyword>
<comment type="function">
    <text evidence="1">Catalyzes the base-exchange of a guanine (G) residue with the queuine precursor 7-aminomethyl-7-deazaguanine (PreQ1) at position 34 (anticodon wobble position) in tRNAs with GU(N) anticodons (tRNA-Asp, -Asn, -His and -Tyr). Catalysis occurs through a double-displacement mechanism. The nucleophile active site attacks the C1' of nucleotide 34 to detach the guanine base from the RNA, forming a covalent enzyme-RNA intermediate. The proton acceptor active site deprotonates the incoming PreQ1, allowing a nucleophilic attack on the C1' of the ribose to form the product. After dissociation, two additional enzymatic reactions on the tRNA convert PreQ1 to queuine (Q), resulting in the hypermodified nucleoside queuosine (7-(((4,5-cis-dihydroxy-2-cyclopenten-1-yl)amino)methyl)-7-deazaguanosine).</text>
</comment>
<comment type="catalytic activity">
    <reaction evidence="1">
        <text>7-aminomethyl-7-carbaguanine + guanosine(34) in tRNA = 7-aminomethyl-7-carbaguanosine(34) in tRNA + guanine</text>
        <dbReference type="Rhea" id="RHEA:24104"/>
        <dbReference type="Rhea" id="RHEA-COMP:10341"/>
        <dbReference type="Rhea" id="RHEA-COMP:10342"/>
        <dbReference type="ChEBI" id="CHEBI:16235"/>
        <dbReference type="ChEBI" id="CHEBI:58703"/>
        <dbReference type="ChEBI" id="CHEBI:74269"/>
        <dbReference type="ChEBI" id="CHEBI:82833"/>
        <dbReference type="EC" id="2.4.2.29"/>
    </reaction>
</comment>
<comment type="cofactor">
    <cofactor evidence="1">
        <name>Zn(2+)</name>
        <dbReference type="ChEBI" id="CHEBI:29105"/>
    </cofactor>
    <text evidence="1">Binds 1 zinc ion per subunit.</text>
</comment>
<comment type="pathway">
    <text evidence="1">tRNA modification; tRNA-queuosine biosynthesis.</text>
</comment>
<comment type="subunit">
    <text evidence="1">Homodimer. Within each dimer, one monomer is responsible for RNA recognition and catalysis, while the other monomer binds to the replacement base PreQ1.</text>
</comment>
<comment type="similarity">
    <text evidence="1">Belongs to the queuine tRNA-ribosyltransferase family.</text>
</comment>